<name>Y209_AQUAE</name>
<accession>O66585</accession>
<sequence length="309" mass="35229">MDILERTFKKLTRLKDNLQDLSQEEAYEVFRAILEGKLSDIKTTAFLTAMRIKGETSEELLGVIKAIKERMNFPQKKEDALDLGLNYDGKNRTIYILPSALWLCSRLGVEFTNHYALGAPTKEGVTLYEVVKELGVDMNVSFVDQKNYAPELYKLMPLRRELGFRSLINTVEKFLNPFQTKKIVVSIFHKPYFDKNAELLELLGIEDYTIIKGLEGGIEPLPDRPTLVKKRGKDIESIEPKSLGLEMPKDVHSENVLRDSLEINRKIIDGRERGEFFNWALYTAGVLLYAAGECESVEEGVGRVEKEST</sequence>
<keyword id="KW-0328">Glycosyltransferase</keyword>
<keyword id="KW-1185">Reference proteome</keyword>
<keyword id="KW-0808">Transferase</keyword>
<comment type="similarity">
    <text evidence="1">Belongs to the anthranilate phosphoribosyltransferase family.</text>
</comment>
<evidence type="ECO:0000305" key="1"/>
<feature type="chain" id="PRO_0000154529" description="Uncharacterized protein aq_209">
    <location>
        <begin position="1"/>
        <end position="309"/>
    </location>
</feature>
<reference key="1">
    <citation type="journal article" date="1998" name="Nature">
        <title>The complete genome of the hyperthermophilic bacterium Aquifex aeolicus.</title>
        <authorList>
            <person name="Deckert G."/>
            <person name="Warren P.V."/>
            <person name="Gaasterland T."/>
            <person name="Young W.G."/>
            <person name="Lenox A.L."/>
            <person name="Graham D.E."/>
            <person name="Overbeek R."/>
            <person name="Snead M.A."/>
            <person name="Keller M."/>
            <person name="Aujay M."/>
            <person name="Huber R."/>
            <person name="Feldman R.A."/>
            <person name="Short J.M."/>
            <person name="Olsen G.J."/>
            <person name="Swanson R.V."/>
        </authorList>
    </citation>
    <scope>NUCLEOTIDE SEQUENCE [LARGE SCALE GENOMIC DNA]</scope>
    <source>
        <strain>VF5</strain>
    </source>
</reference>
<dbReference type="EMBL" id="AE000657">
    <property type="protein sequence ID" value="AAC06539.1"/>
    <property type="molecule type" value="Genomic_DNA"/>
</dbReference>
<dbReference type="PIR" id="E70319">
    <property type="entry name" value="E70319"/>
</dbReference>
<dbReference type="RefSeq" id="NP_213145.1">
    <property type="nucleotide sequence ID" value="NC_000918.1"/>
</dbReference>
<dbReference type="RefSeq" id="WP_010880083.1">
    <property type="nucleotide sequence ID" value="NC_000918.1"/>
</dbReference>
<dbReference type="SMR" id="O66585"/>
<dbReference type="FunCoup" id="O66585">
    <property type="interactions" value="33"/>
</dbReference>
<dbReference type="STRING" id="224324.aq_209"/>
<dbReference type="EnsemblBacteria" id="AAC06539">
    <property type="protein sequence ID" value="AAC06539"/>
    <property type="gene ID" value="aq_209"/>
</dbReference>
<dbReference type="KEGG" id="aae:aq_209"/>
<dbReference type="PATRIC" id="fig|224324.8.peg.176"/>
<dbReference type="eggNOG" id="COG0547">
    <property type="taxonomic scope" value="Bacteria"/>
</dbReference>
<dbReference type="HOGENOM" id="CLU_034315_0_1_0"/>
<dbReference type="InParanoid" id="O66585"/>
<dbReference type="OrthoDB" id="9926at2"/>
<dbReference type="Proteomes" id="UP000000798">
    <property type="component" value="Chromosome"/>
</dbReference>
<dbReference type="GO" id="GO:0005829">
    <property type="term" value="C:cytosol"/>
    <property type="evidence" value="ECO:0000318"/>
    <property type="project" value="GO_Central"/>
</dbReference>
<dbReference type="GO" id="GO:0004048">
    <property type="term" value="F:anthranilate phosphoribosyltransferase activity"/>
    <property type="evidence" value="ECO:0007669"/>
    <property type="project" value="InterPro"/>
</dbReference>
<dbReference type="GO" id="GO:0000162">
    <property type="term" value="P:L-tryptophan biosynthetic process"/>
    <property type="evidence" value="ECO:0000318"/>
    <property type="project" value="GO_Central"/>
</dbReference>
<dbReference type="FunFam" id="3.40.1030.10:FF:000010">
    <property type="entry name" value="Anthranilate phosphoribosyltransferase"/>
    <property type="match status" value="1"/>
</dbReference>
<dbReference type="Gene3D" id="3.40.1030.10">
    <property type="entry name" value="Nucleoside phosphorylase/phosphoribosyltransferase catalytic domain"/>
    <property type="match status" value="1"/>
</dbReference>
<dbReference type="Gene3D" id="1.20.970.10">
    <property type="entry name" value="Transferase, Pyrimidine Nucleoside Phosphorylase, Chain C"/>
    <property type="match status" value="1"/>
</dbReference>
<dbReference type="InterPro" id="IPR005940">
    <property type="entry name" value="Anthranilate_Pribosyl_Tfrase"/>
</dbReference>
<dbReference type="InterPro" id="IPR000312">
    <property type="entry name" value="Glycosyl_Trfase_fam3"/>
</dbReference>
<dbReference type="InterPro" id="IPR017459">
    <property type="entry name" value="Glycosyl_Trfase_fam3_N_dom"/>
</dbReference>
<dbReference type="InterPro" id="IPR036320">
    <property type="entry name" value="Glycosyl_Trfase_fam3_N_dom_sf"/>
</dbReference>
<dbReference type="InterPro" id="IPR035902">
    <property type="entry name" value="Nuc_phospho_transferase"/>
</dbReference>
<dbReference type="PANTHER" id="PTHR43285">
    <property type="entry name" value="ANTHRANILATE PHOSPHORIBOSYLTRANSFERASE"/>
    <property type="match status" value="1"/>
</dbReference>
<dbReference type="PANTHER" id="PTHR43285:SF2">
    <property type="entry name" value="ANTHRANILATE PHOSPHORIBOSYLTRANSFERASE"/>
    <property type="match status" value="1"/>
</dbReference>
<dbReference type="Pfam" id="PF02885">
    <property type="entry name" value="Glycos_trans_3N"/>
    <property type="match status" value="1"/>
</dbReference>
<dbReference type="Pfam" id="PF00591">
    <property type="entry name" value="Glycos_transf_3"/>
    <property type="match status" value="1"/>
</dbReference>
<dbReference type="SUPFAM" id="SSF52418">
    <property type="entry name" value="Nucleoside phosphorylase/phosphoribosyltransferase catalytic domain"/>
    <property type="match status" value="1"/>
</dbReference>
<dbReference type="SUPFAM" id="SSF47648">
    <property type="entry name" value="Nucleoside phosphorylase/phosphoribosyltransferase N-terminal domain"/>
    <property type="match status" value="1"/>
</dbReference>
<gene>
    <name type="ordered locus">aq_209</name>
</gene>
<protein>
    <recommendedName>
        <fullName>Uncharacterized protein aq_209</fullName>
    </recommendedName>
</protein>
<organism>
    <name type="scientific">Aquifex aeolicus (strain VF5)</name>
    <dbReference type="NCBI Taxonomy" id="224324"/>
    <lineage>
        <taxon>Bacteria</taxon>
        <taxon>Pseudomonadati</taxon>
        <taxon>Aquificota</taxon>
        <taxon>Aquificia</taxon>
        <taxon>Aquificales</taxon>
        <taxon>Aquificaceae</taxon>
        <taxon>Aquifex</taxon>
    </lineage>
</organism>
<proteinExistence type="inferred from homology"/>